<keyword id="KW-1003">Cell membrane</keyword>
<keyword id="KW-0961">Cell wall biogenesis/degradation</keyword>
<keyword id="KW-0328">Glycosyltransferase</keyword>
<keyword id="KW-0472">Membrane</keyword>
<keyword id="KW-1185">Reference proteome</keyword>
<keyword id="KW-0808">Transferase</keyword>
<keyword id="KW-0812">Transmembrane</keyword>
<keyword id="KW-1133">Transmembrane helix</keyword>
<evidence type="ECO:0000250" key="1">
    <source>
        <dbReference type="UniProtKB" id="P9WN03"/>
    </source>
</evidence>
<evidence type="ECO:0000255" key="2"/>
<evidence type="ECO:0000305" key="3"/>
<reference key="1">
    <citation type="journal article" date="2002" name="J. Bacteriol.">
        <title>Whole-genome comparison of Mycobacterium tuberculosis clinical and laboratory strains.</title>
        <authorList>
            <person name="Fleischmann R.D."/>
            <person name="Alland D."/>
            <person name="Eisen J.A."/>
            <person name="Carpenter L."/>
            <person name="White O."/>
            <person name="Peterson J.D."/>
            <person name="DeBoy R.T."/>
            <person name="Dodson R.J."/>
            <person name="Gwinn M.L."/>
            <person name="Haft D.H."/>
            <person name="Hickey E.K."/>
            <person name="Kolonay J.F."/>
            <person name="Nelson W.C."/>
            <person name="Umayam L.A."/>
            <person name="Ermolaeva M.D."/>
            <person name="Salzberg S.L."/>
            <person name="Delcher A."/>
            <person name="Utterback T.R."/>
            <person name="Weidman J.F."/>
            <person name="Khouri H.M."/>
            <person name="Gill J."/>
            <person name="Mikula A."/>
            <person name="Bishai W."/>
            <person name="Jacobs W.R. Jr."/>
            <person name="Venter J.C."/>
            <person name="Fraser C.M."/>
        </authorList>
    </citation>
    <scope>NUCLEOTIDE SEQUENCE [LARGE SCALE GENOMIC DNA]</scope>
    <source>
        <strain>CDC 1551 / Oshkosh</strain>
    </source>
</reference>
<sequence length="643" mass="69515">MPSRRKSPQFGHEMGAFTSARAREVLVALGQLAAAVVVAVGVAVVSLLAIARVEWPAFPSSNQLHALTTVGQVGCLAGLVGIGWLWRHGRFRRLARLGGLVLVSAFTVVTLGMPLGATKLYLFGISVDQQFRTEYLTRLTDTAALRDMTYIGLPPFYPPGWFWIGGRAAALTGTPAWEMFKPWAITSMAIAVAVALVLWWRMIRFEYALLVTVATAAVMLAYSSPEPYAAMITVLLPPMLVLTWSGLGARDRQGWAAVVGAGVFLGFAATWYTLLVAYGAFTVVLMALLLAGSRLQSGIKAAVDPLCRLAVVGAIAAAIGSTTWLPYLLRAARDPVSDTGSAQHYLPADGAALTFPMLQFSLLGAICLLGTLWLVMRARSSAPAGALAIGVLAVYLWSLLSMLATLARTTLLSFRLQPTLSVLLVAAGAFGFVEAVQALGKRGRGVIPMAAAIGLAGAIAFSQDIPDVLRPDLTIAYTDTDGYGQRGDRRPPGSEKYYPAIDAAIRRVTGKRRDRTVVLTADYSFLSYYPYWGFQGLTPHYANPLAQFDKRATQIDSWSGLSTADEFIAALDKLPWQPPTVFLMRHGAHNSYTLRLAQDVYPNQPNVRRYTVDLRTALFADPRFVVEDIGPFVLAIRKPQESA</sequence>
<comment type="function">
    <text evidence="1">Involved in the biosynthesis of the arabinogalactan (AG) region of the mycolylarabinogalactan-peptidoglycan (mAGP) complex, an essential component of the mycobacterial cell wall. Catalyzes the addition of the first key arabinofuranosyl (Araf) residue from the sugar donor decaprenyl-phospho-arabinose (DPA) on the C-5 of a 6-linked galactofuranosyl (Galf) of the galactan domain, thus 'priming' the galactan for further elaboration by other arabinofuranosyltransferases. It is not able to add an Araf residue to a terminal Galf.</text>
</comment>
<comment type="catalytic activity">
    <reaction evidence="1">
        <text>Adds an alpha-D-arabinofuranosyl group from trans,octacis-decaprenylphospho-beta-D-arabinofuranose at the 5-O-position of the eighth, tenth and twelfth galactofuranose unit of the galactofuranan chain of [beta-D-galactofuranosyl-(1-&gt;5)-beta-D-galactofuranosyl-(1-&gt;6)]14-beta-D-galactofuranosyl-(1-&gt;5)-beta-D-galactofuranosyl-(1-&gt;4)-alpha-L-rhamnopyranosyl-(1-&gt;3)-N-acetyl-alpha-D-glucosaminyl-diphospho-trans,octacis-decaprenol.</text>
        <dbReference type="EC" id="2.4.2.46"/>
    </reaction>
</comment>
<comment type="pathway">
    <text evidence="1">Cell wall biogenesis; cell wall polysaccharide biosynthesis.</text>
</comment>
<comment type="subcellular location">
    <subcellularLocation>
        <location evidence="1">Cell membrane</location>
        <topology evidence="1">Multi-pass membrane protein</topology>
    </subcellularLocation>
</comment>
<comment type="similarity">
    <text evidence="3">Belongs to the glycosyltransferase 85 family.</text>
</comment>
<comment type="sequence caution" evidence="3">
    <conflict type="frameshift">
        <sequence resource="EMBL-CDS" id="AAK48265"/>
    </conflict>
</comment>
<proteinExistence type="inferred from homology"/>
<protein>
    <recommendedName>
        <fullName evidence="1">Galactan 5-O-arabinofuranosyltransferase</fullName>
        <ecNumber evidence="1">2.4.2.46</ecNumber>
    </recommendedName>
    <alternativeName>
        <fullName evidence="1">Arabinofuranosyltransferase AftA</fullName>
    </alternativeName>
</protein>
<dbReference type="EC" id="2.4.2.46" evidence="1"/>
<dbReference type="EMBL" id="AE000516">
    <property type="protein sequence ID" value="AAK48265.1"/>
    <property type="status" value="ALT_FRAME"/>
    <property type="molecule type" value="Genomic_DNA"/>
</dbReference>
<dbReference type="PIR" id="D70697">
    <property type="entry name" value="D70697"/>
</dbReference>
<dbReference type="RefSeq" id="WP_003899694.1">
    <property type="nucleotide sequence ID" value="NZ_KK341227.1"/>
</dbReference>
<dbReference type="SMR" id="P9WN02"/>
<dbReference type="CAZy" id="GT85">
    <property type="family name" value="Glycosyltransferase Family 85"/>
</dbReference>
<dbReference type="KEGG" id="mtc:MT3899.1"/>
<dbReference type="PATRIC" id="fig|83331.31.peg.4196"/>
<dbReference type="HOGENOM" id="CLU_021304_0_0_11"/>
<dbReference type="UniPathway" id="UPA00963"/>
<dbReference type="Proteomes" id="UP000001020">
    <property type="component" value="Chromosome"/>
</dbReference>
<dbReference type="GO" id="GO:0005886">
    <property type="term" value="C:plasma membrane"/>
    <property type="evidence" value="ECO:0007669"/>
    <property type="project" value="UniProtKB-SubCell"/>
</dbReference>
<dbReference type="GO" id="GO:0016757">
    <property type="term" value="F:glycosyltransferase activity"/>
    <property type="evidence" value="ECO:0007669"/>
    <property type="project" value="UniProtKB-KW"/>
</dbReference>
<dbReference type="GO" id="GO:0045227">
    <property type="term" value="P:capsule polysaccharide biosynthetic process"/>
    <property type="evidence" value="ECO:0007669"/>
    <property type="project" value="UniProtKB-UniPathway"/>
</dbReference>
<dbReference type="GO" id="GO:0044038">
    <property type="term" value="P:cell wall macromolecule biosynthetic process"/>
    <property type="evidence" value="ECO:0007669"/>
    <property type="project" value="InterPro"/>
</dbReference>
<dbReference type="GO" id="GO:0071555">
    <property type="term" value="P:cell wall organization"/>
    <property type="evidence" value="ECO:0007669"/>
    <property type="project" value="UniProtKB-KW"/>
</dbReference>
<dbReference type="InterPro" id="IPR020959">
    <property type="entry name" value="ArabinofuranosylTrfase_AftA_C"/>
</dbReference>
<dbReference type="InterPro" id="IPR020963">
    <property type="entry name" value="ArabinofuranosylTrfase_AftA_N"/>
</dbReference>
<dbReference type="Pfam" id="PF12249">
    <property type="entry name" value="AftA_C"/>
    <property type="match status" value="1"/>
</dbReference>
<dbReference type="Pfam" id="PF12250">
    <property type="entry name" value="AftA_N"/>
    <property type="match status" value="1"/>
</dbReference>
<name>AFTA_MYCTO</name>
<feature type="chain" id="PRO_0000427212" description="Galactan 5-O-arabinofuranosyltransferase">
    <location>
        <begin position="1"/>
        <end position="643"/>
    </location>
</feature>
<feature type="transmembrane region" description="Helical" evidence="2">
    <location>
        <begin position="25"/>
        <end position="45"/>
    </location>
</feature>
<feature type="transmembrane region" description="Helical" evidence="2">
    <location>
        <begin position="66"/>
        <end position="86"/>
    </location>
</feature>
<feature type="transmembrane region" description="Helical" evidence="2">
    <location>
        <begin position="97"/>
        <end position="117"/>
    </location>
</feature>
<feature type="transmembrane region" description="Helical" evidence="2">
    <location>
        <begin position="180"/>
        <end position="200"/>
    </location>
</feature>
<feature type="transmembrane region" description="Helical" evidence="2">
    <location>
        <begin position="205"/>
        <end position="225"/>
    </location>
</feature>
<feature type="transmembrane region" description="Helical" evidence="2">
    <location>
        <begin position="229"/>
        <end position="249"/>
    </location>
</feature>
<feature type="transmembrane region" description="Helical" evidence="2">
    <location>
        <begin position="255"/>
        <end position="272"/>
    </location>
</feature>
<feature type="transmembrane region" description="Helical" evidence="2">
    <location>
        <begin position="276"/>
        <end position="293"/>
    </location>
</feature>
<feature type="transmembrane region" description="Helical" evidence="2">
    <location>
        <begin position="309"/>
        <end position="329"/>
    </location>
</feature>
<feature type="transmembrane region" description="Helical" evidence="2">
    <location>
        <begin position="355"/>
        <end position="375"/>
    </location>
</feature>
<feature type="transmembrane region" description="Helical" evidence="2">
    <location>
        <begin position="384"/>
        <end position="404"/>
    </location>
</feature>
<feature type="transmembrane region" description="Helical" evidence="2">
    <location>
        <begin position="420"/>
        <end position="440"/>
    </location>
</feature>
<feature type="transmembrane region" description="Helical" evidence="2">
    <location>
        <begin position="445"/>
        <end position="465"/>
    </location>
</feature>
<feature type="topological domain" description="Extracellular" evidence="2">
    <location>
        <begin position="466"/>
        <end position="643"/>
    </location>
</feature>
<organism>
    <name type="scientific">Mycobacterium tuberculosis (strain CDC 1551 / Oshkosh)</name>
    <dbReference type="NCBI Taxonomy" id="83331"/>
    <lineage>
        <taxon>Bacteria</taxon>
        <taxon>Bacillati</taxon>
        <taxon>Actinomycetota</taxon>
        <taxon>Actinomycetes</taxon>
        <taxon>Mycobacteriales</taxon>
        <taxon>Mycobacteriaceae</taxon>
        <taxon>Mycobacterium</taxon>
        <taxon>Mycobacterium tuberculosis complex</taxon>
    </lineage>
</organism>
<accession>P9WN02</accession>
<accession>L0TGK7</accession>
<accession>P72058</accession>
<accession>Q8VIT6</accession>
<gene>
    <name evidence="1" type="primary">aftA</name>
    <name type="ordered locus">MT3899.1</name>
</gene>